<name>OXLA_DABRR</name>
<protein>
    <recommendedName>
        <fullName>L-amino-acid oxidase</fullName>
        <shortName evidence="5">DrLAO</shortName>
        <shortName>LAAO</shortName>
        <ecNumber evidence="4">1.4.3.2</ecNumber>
    </recommendedName>
</protein>
<proteinExistence type="evidence at protein level"/>
<comment type="function">
    <text evidence="1 4">Catalyzes an oxidative deamination of predominantly hydrophobic and aromatic L-amino acids, thus producing hydrogen peroxide that may contribute to the diverse toxic effects of this enzyme (PubMed:21802487). Is highly active on L-Tyr followed by L-Phe, L-Met, L-Leu, L-Trp, and weakly active on L-Ile, L-Arg, L-Val, L-Lys, and L-Ala (PubMed:21802487). Inhibits ADP- and collagen-induced platelet aggregation (PubMed:21802487). This inhibition is inhibited by catalase, indicating the importance of generated H(2)O(2) for the inhibitory effect (PubMed:21802487). This effect on platelets among snake L-amino-acid oxidases is however controversial, since some of them induce aggregation, whereas the other inhibit agonist-induced aggregation (By similarity). In vivo, this enzyme induces a rapid, substantial and reversible increase in the paw volume of mice (edema) (PubMed:21802487). In addition, myofibrosis, and inflammatory cell infiltration on the paw tissue are also observed (PubMed:21802487).</text>
</comment>
<comment type="catalytic activity">
    <reaction evidence="4">
        <text>an L-alpha-amino acid + O2 + H2O = a 2-oxocarboxylate + H2O2 + NH4(+)</text>
        <dbReference type="Rhea" id="RHEA:13781"/>
        <dbReference type="ChEBI" id="CHEBI:15377"/>
        <dbReference type="ChEBI" id="CHEBI:15379"/>
        <dbReference type="ChEBI" id="CHEBI:16240"/>
        <dbReference type="ChEBI" id="CHEBI:28938"/>
        <dbReference type="ChEBI" id="CHEBI:35179"/>
        <dbReference type="ChEBI" id="CHEBI:59869"/>
        <dbReference type="EC" id="1.4.3.2"/>
    </reaction>
</comment>
<comment type="catalytic activity">
    <reaction evidence="4">
        <text>L-leucine + O2 + H2O = 4-methyl-2-oxopentanoate + H2O2 + NH4(+)</text>
        <dbReference type="Rhea" id="RHEA:60996"/>
        <dbReference type="ChEBI" id="CHEBI:15377"/>
        <dbReference type="ChEBI" id="CHEBI:15379"/>
        <dbReference type="ChEBI" id="CHEBI:16240"/>
        <dbReference type="ChEBI" id="CHEBI:17865"/>
        <dbReference type="ChEBI" id="CHEBI:28938"/>
        <dbReference type="ChEBI" id="CHEBI:57427"/>
    </reaction>
</comment>
<comment type="catalytic activity">
    <reaction evidence="4">
        <text>L-phenylalanine + O2 + H2O = 3-phenylpyruvate + H2O2 + NH4(+)</text>
        <dbReference type="Rhea" id="RHEA:61240"/>
        <dbReference type="ChEBI" id="CHEBI:15377"/>
        <dbReference type="ChEBI" id="CHEBI:15379"/>
        <dbReference type="ChEBI" id="CHEBI:16240"/>
        <dbReference type="ChEBI" id="CHEBI:18005"/>
        <dbReference type="ChEBI" id="CHEBI:28938"/>
        <dbReference type="ChEBI" id="CHEBI:58095"/>
    </reaction>
</comment>
<comment type="catalytic activity">
    <reaction evidence="4">
        <text>L-tryptophan + O2 + H2O = indole-3-pyruvate + H2O2 + NH4(+)</text>
        <dbReference type="Rhea" id="RHEA:61244"/>
        <dbReference type="ChEBI" id="CHEBI:15377"/>
        <dbReference type="ChEBI" id="CHEBI:15379"/>
        <dbReference type="ChEBI" id="CHEBI:16240"/>
        <dbReference type="ChEBI" id="CHEBI:17640"/>
        <dbReference type="ChEBI" id="CHEBI:28938"/>
        <dbReference type="ChEBI" id="CHEBI:57912"/>
    </reaction>
</comment>
<comment type="catalytic activity">
    <reaction evidence="4">
        <text>L-methionine + O2 + H2O = 4-methylsulfanyl-2-oxobutanoate + H2O2 + NH4(+)</text>
        <dbReference type="Rhea" id="RHEA:61236"/>
        <dbReference type="ChEBI" id="CHEBI:15377"/>
        <dbReference type="ChEBI" id="CHEBI:15379"/>
        <dbReference type="ChEBI" id="CHEBI:16240"/>
        <dbReference type="ChEBI" id="CHEBI:16723"/>
        <dbReference type="ChEBI" id="CHEBI:28938"/>
        <dbReference type="ChEBI" id="CHEBI:57844"/>
    </reaction>
</comment>
<comment type="catalytic activity">
    <reaction evidence="4">
        <text>L-tyrosine + O2 + H2O = 3-(4-hydroxyphenyl)pyruvate + H2O2 + NH4(+)</text>
        <dbReference type="Rhea" id="RHEA:61248"/>
        <dbReference type="ChEBI" id="CHEBI:15377"/>
        <dbReference type="ChEBI" id="CHEBI:15379"/>
        <dbReference type="ChEBI" id="CHEBI:16240"/>
        <dbReference type="ChEBI" id="CHEBI:28938"/>
        <dbReference type="ChEBI" id="CHEBI:36242"/>
        <dbReference type="ChEBI" id="CHEBI:58315"/>
    </reaction>
</comment>
<comment type="cofactor">
    <cofactor evidence="2">
        <name>FAD</name>
        <dbReference type="ChEBI" id="CHEBI:57692"/>
    </cofactor>
</comment>
<comment type="biophysicochemical properties">
    <kinetics>
        <KM evidence="4">0.081 mM for L-Tyr (at pH 7.5 and 25 degrees Celsius)</KM>
        <KM evidence="4">0.142 mM for L-Phe (at pH 7.5 and 25 degrees Celsius)</KM>
        <KM evidence="4">0.373 mM for L-Met (at pH 7.5 and 25 degrees Celsius)</KM>
        <KM evidence="4">0.318 mM for L-Trp (at pH 7.5 and 25 degrees Celsius)</KM>
        <KM evidence="4">0.49 mM for L-Leu (at pH 7.5 and 25 degrees Celsius)</KM>
        <KM evidence="4">1.4 mM for L-Ile (at pH 7.5 and 25 degrees Celsius)</KM>
        <KM evidence="4">12.2 mM for L-Arg (at pH 7.5 and 25 degrees Celsius)</KM>
        <KM evidence="4">13.92 mM for L-Val (at pH 7.5 and 25 degrees Celsius)</KM>
        <KM evidence="4">64 mM for L-Lys (at pH 7.5 and 25 degrees Celsius)</KM>
        <KM evidence="4">116.48 mM for L-Ala (at pH 7.5 and 25 degrees Celsius)</KM>
    </kinetics>
</comment>
<comment type="subunit">
    <text evidence="2">Homodimer; non-covalently linked.</text>
</comment>
<comment type="subcellular location">
    <subcellularLocation>
        <location evidence="4">Secreted</location>
    </subcellularLocation>
</comment>
<comment type="tissue specificity">
    <text evidence="7">Expressed by the venom gland.</text>
</comment>
<comment type="mass spectrometry"/>
<comment type="miscellaneous">
    <text evidence="7">Negative results: does not induce dermal hemorrhage when subcutaneously injected into mice at the dose of 40 ug.</text>
</comment>
<comment type="similarity">
    <text evidence="6">Belongs to the flavin monoamine oxidase family. FIG1 subfamily.</text>
</comment>
<reference key="1">
    <citation type="journal article" date="2012" name="Biochimie">
        <title>Cloning, characterization and mutagenesis of Russell's viper venom L-amino acid oxidase: insights into its catalytic mechanism.</title>
        <authorList>
            <person name="Chen H.-S."/>
            <person name="Wang Y.-M."/>
            <person name="Huang W.-T."/>
            <person name="Huang K.-F."/>
            <person name="Tsai I.-H."/>
        </authorList>
    </citation>
    <scope>NUCLEOTIDE SEQUENCE [MRNA]</scope>
    <scope>PROTEIN SEQUENCE OF 19-38</scope>
    <scope>FUNCTION</scope>
    <scope>BIOPHYSICOCHEMICAL PROPERTIES</scope>
    <scope>MUTAGENESIS OF HIS-241</scope>
    <scope>MASS SPECTROMETRY</scope>
    <scope>SUBCELLULAR LOCATION</scope>
    <scope>IDENTIFICATION BY MASS SPECTROMETRY</scope>
    <scope>3D-STRUCTURE MODELING IN COMPLEX WITH SUBSTRATE</scope>
    <scope>SUBSTRATE SPECIFICITY</scope>
    <source>
        <strain>Eastern India</strain>
        <tissue>Venom</tissue>
        <tissue>Venom gland</tissue>
    </source>
</reference>
<dbReference type="EC" id="1.4.3.2" evidence="4"/>
<dbReference type="EMBL" id="EU663622">
    <property type="protein sequence ID" value="ACF70483.1"/>
    <property type="molecule type" value="mRNA"/>
</dbReference>
<dbReference type="SMR" id="G8XQX1"/>
<dbReference type="SABIO-RK" id="G8XQX1"/>
<dbReference type="GO" id="GO:0005576">
    <property type="term" value="C:extracellular region"/>
    <property type="evidence" value="ECO:0000303"/>
    <property type="project" value="UniProtKB"/>
</dbReference>
<dbReference type="GO" id="GO:0043655">
    <property type="term" value="C:host extracellular space"/>
    <property type="evidence" value="ECO:0000303"/>
    <property type="project" value="UniProtKB"/>
</dbReference>
<dbReference type="GO" id="GO:0050660">
    <property type="term" value="F:flavin adenine dinucleotide binding"/>
    <property type="evidence" value="ECO:0000304"/>
    <property type="project" value="UniProtKB"/>
</dbReference>
<dbReference type="GO" id="GO:0001716">
    <property type="term" value="F:L-amino-acid oxidase activity"/>
    <property type="evidence" value="ECO:0000314"/>
    <property type="project" value="UniProtKB"/>
</dbReference>
<dbReference type="GO" id="GO:0106329">
    <property type="term" value="F:L-phenylalaine oxidase activity"/>
    <property type="evidence" value="ECO:0007669"/>
    <property type="project" value="RHEA"/>
</dbReference>
<dbReference type="GO" id="GO:0090729">
    <property type="term" value="F:toxin activity"/>
    <property type="evidence" value="ECO:0007669"/>
    <property type="project" value="UniProtKB-KW"/>
</dbReference>
<dbReference type="GO" id="GO:0009063">
    <property type="term" value="P:amino acid catabolic process"/>
    <property type="evidence" value="ECO:0007669"/>
    <property type="project" value="TreeGrafter"/>
</dbReference>
<dbReference type="GO" id="GO:0031640">
    <property type="term" value="P:killing of cells of another organism"/>
    <property type="evidence" value="ECO:0007669"/>
    <property type="project" value="UniProtKB-KW"/>
</dbReference>
<dbReference type="GO" id="GO:0044398">
    <property type="term" value="P:venom-mediated edema in another organism"/>
    <property type="evidence" value="ECO:0000314"/>
    <property type="project" value="UniProtKB"/>
</dbReference>
<dbReference type="GO" id="GO:0044477">
    <property type="term" value="P:venom-mediated suppression of platelet aggregation"/>
    <property type="evidence" value="ECO:0000314"/>
    <property type="project" value="UniProtKB"/>
</dbReference>
<dbReference type="FunFam" id="1.10.405.10:FF:000004">
    <property type="entry name" value="Amine oxidase"/>
    <property type="match status" value="1"/>
</dbReference>
<dbReference type="FunFam" id="3.50.50.60:FF:000450">
    <property type="entry name" value="Amine oxidase"/>
    <property type="match status" value="1"/>
</dbReference>
<dbReference type="FunFam" id="3.50.50.60:FF:001010">
    <property type="entry name" value="L-amino-acid oxidase"/>
    <property type="match status" value="1"/>
</dbReference>
<dbReference type="Gene3D" id="3.90.660.10">
    <property type="match status" value="1"/>
</dbReference>
<dbReference type="Gene3D" id="3.50.50.60">
    <property type="entry name" value="FAD/NAD(P)-binding domain"/>
    <property type="match status" value="1"/>
</dbReference>
<dbReference type="Gene3D" id="1.10.405.10">
    <property type="entry name" value="Guanine Nucleotide Dissociation Inhibitor, domain 1"/>
    <property type="match status" value="1"/>
</dbReference>
<dbReference type="InterPro" id="IPR002937">
    <property type="entry name" value="Amino_oxidase"/>
</dbReference>
<dbReference type="InterPro" id="IPR036188">
    <property type="entry name" value="FAD/NAD-bd_sf"/>
</dbReference>
<dbReference type="InterPro" id="IPR050281">
    <property type="entry name" value="Flavin_monoamine_oxidase"/>
</dbReference>
<dbReference type="PANTHER" id="PTHR10742:SF355">
    <property type="entry name" value="AMINE OXIDASE"/>
    <property type="match status" value="1"/>
</dbReference>
<dbReference type="PANTHER" id="PTHR10742">
    <property type="entry name" value="FLAVIN MONOAMINE OXIDASE"/>
    <property type="match status" value="1"/>
</dbReference>
<dbReference type="Pfam" id="PF01593">
    <property type="entry name" value="Amino_oxidase"/>
    <property type="match status" value="1"/>
</dbReference>
<dbReference type="SUPFAM" id="SSF54373">
    <property type="entry name" value="FAD-linked reductases, C-terminal domain"/>
    <property type="match status" value="1"/>
</dbReference>
<dbReference type="SUPFAM" id="SSF51905">
    <property type="entry name" value="FAD/NAD(P)-binding domain"/>
    <property type="match status" value="1"/>
</dbReference>
<accession>G8XQX1</accession>
<organism>
    <name type="scientific">Daboia russelii</name>
    <name type="common">Russel's viper</name>
    <name type="synonym">Vipera russelii</name>
    <dbReference type="NCBI Taxonomy" id="8707"/>
    <lineage>
        <taxon>Eukaryota</taxon>
        <taxon>Metazoa</taxon>
        <taxon>Chordata</taxon>
        <taxon>Craniata</taxon>
        <taxon>Vertebrata</taxon>
        <taxon>Euteleostomi</taxon>
        <taxon>Lepidosauria</taxon>
        <taxon>Squamata</taxon>
        <taxon>Bifurcata</taxon>
        <taxon>Unidentata</taxon>
        <taxon>Episquamata</taxon>
        <taxon>Toxicofera</taxon>
        <taxon>Serpentes</taxon>
        <taxon>Colubroidea</taxon>
        <taxon>Viperidae</taxon>
        <taxon>Viperinae</taxon>
        <taxon>Daboia</taxon>
    </lineage>
</organism>
<keyword id="KW-0204">Cytolysis</keyword>
<keyword id="KW-0903">Direct protein sequencing</keyword>
<keyword id="KW-1015">Disulfide bond</keyword>
<keyword id="KW-0274">FAD</keyword>
<keyword id="KW-0285">Flavoprotein</keyword>
<keyword id="KW-0325">Glycoprotein</keyword>
<keyword id="KW-0354">Hemolysis</keyword>
<keyword id="KW-1199">Hemostasis impairing toxin</keyword>
<keyword id="KW-0560">Oxidoreductase</keyword>
<keyword id="KW-1201">Platelet aggregation inhibiting toxin</keyword>
<keyword id="KW-0964">Secreted</keyword>
<keyword id="KW-0732">Signal</keyword>
<keyword id="KW-0800">Toxin</keyword>
<evidence type="ECO:0000250" key="1">
    <source>
        <dbReference type="UniProtKB" id="P0CC17"/>
    </source>
</evidence>
<evidence type="ECO:0000250" key="2">
    <source>
        <dbReference type="UniProtKB" id="P81382"/>
    </source>
</evidence>
<evidence type="ECO:0000255" key="3"/>
<evidence type="ECO:0000269" key="4">
    <source>
    </source>
</evidence>
<evidence type="ECO:0000303" key="5">
    <source>
    </source>
</evidence>
<evidence type="ECO:0000305" key="6"/>
<evidence type="ECO:0000305" key="7">
    <source>
    </source>
</evidence>
<sequence>MNVFFMFSLLFLATLGSCADDKNPLEECFREDDYEEFLEIAKNGLKKTSNPKHIVIVGAGMSGLSAAYVLAGAGHKVTVLEASERPGGRVRTHRNVKEGWYANLGPMRVPEKHRIIREYIRKFGLKLNEFVQETENGWYFIKNIRKRVGEVKKDPGLLKYPVKPSEAGKSAGQLYQESLGKAVEELKRTNCSYILNKYDTYSTKEYLIKEGNLSPGAVDMIGDLLNEDSGYYVSFIESLKHDDIFAYEKRFDEIVGGMDQLPTSMYRAIEESVHFKARVIKIQQNAEKVTVTYQTTQKNLLLETADYVIVCTTSRAARRITFKPPLPPKKAHALRSVHYRSGTKIFLTCTKKFWEDDGIQGGKSTTDLPSRFIYYPNHNFTTGVGVIIAYGIGDDANFFQALNLNECADIVFNDLSSIHQLPKKDLQTFCYPSIIQKWSLDKYAMGAITTFTPYQFQHFSEALTAPVGRIFFAGEYTANAHGWIDSTIKSGLTAARDVNRASEL</sequence>
<feature type="signal peptide" evidence="4">
    <location>
        <begin position="1"/>
        <end position="18"/>
    </location>
</feature>
<feature type="chain" id="PRO_5000825648" description="L-amino-acid oxidase">
    <location>
        <begin position="19"/>
        <end position="504"/>
    </location>
</feature>
<feature type="binding site" evidence="2">
    <location>
        <begin position="61"/>
        <end position="62"/>
    </location>
    <ligand>
        <name>FAD</name>
        <dbReference type="ChEBI" id="CHEBI:57692"/>
    </ligand>
</feature>
<feature type="binding site" evidence="2">
    <location>
        <begin position="81"/>
        <end position="82"/>
    </location>
    <ligand>
        <name>FAD</name>
        <dbReference type="ChEBI" id="CHEBI:57692"/>
    </ligand>
</feature>
<feature type="binding site" evidence="2">
    <location>
        <position position="89"/>
    </location>
    <ligand>
        <name>FAD</name>
        <dbReference type="ChEBI" id="CHEBI:57692"/>
    </ligand>
</feature>
<feature type="binding site" evidence="2">
    <location>
        <begin position="105"/>
        <end position="108"/>
    </location>
    <ligand>
        <name>FAD</name>
        <dbReference type="ChEBI" id="CHEBI:57692"/>
    </ligand>
</feature>
<feature type="binding site" evidence="2">
    <location>
        <position position="108"/>
    </location>
    <ligand>
        <name>substrate</name>
    </ligand>
</feature>
<feature type="binding site" evidence="2">
    <location>
        <position position="241"/>
    </location>
    <ligand>
        <name>substrate</name>
    </ligand>
</feature>
<feature type="binding site" evidence="2">
    <location>
        <position position="279"/>
    </location>
    <ligand>
        <name>FAD</name>
        <dbReference type="ChEBI" id="CHEBI:57692"/>
    </ligand>
</feature>
<feature type="binding site" evidence="2">
    <location>
        <position position="390"/>
    </location>
    <ligand>
        <name>substrate</name>
    </ligand>
</feature>
<feature type="binding site" evidence="2">
    <location>
        <position position="475"/>
    </location>
    <ligand>
        <name>FAD</name>
        <dbReference type="ChEBI" id="CHEBI:57692"/>
    </ligand>
</feature>
<feature type="binding site" evidence="2">
    <location>
        <begin position="482"/>
        <end position="487"/>
    </location>
    <ligand>
        <name>FAD</name>
        <dbReference type="ChEBI" id="CHEBI:57692"/>
    </ligand>
</feature>
<feature type="binding site" evidence="2">
    <location>
        <begin position="482"/>
        <end position="483"/>
    </location>
    <ligand>
        <name>substrate</name>
    </ligand>
</feature>
<feature type="glycosylation site" description="N-linked (GlcNAc...) asparagine" evidence="3">
    <location>
        <position position="190"/>
    </location>
</feature>
<feature type="glycosylation site" description="N-linked (GlcNAc...) asparagine" evidence="3">
    <location>
        <position position="379"/>
    </location>
</feature>
<feature type="disulfide bond" evidence="2">
    <location>
        <begin position="28"/>
        <end position="191"/>
    </location>
</feature>
<feature type="disulfide bond" evidence="2">
    <location>
        <begin position="349"/>
        <end position="430"/>
    </location>
</feature>
<feature type="mutagenesis site" description="Shows high reactivity toward L-Arg, but does not induce change toward L-Leu, L-Phe and L-Met." evidence="4">
    <original>H</original>
    <variation>A</variation>
    <location>
        <position position="241"/>
    </location>
</feature>
<feature type="mutagenesis site" description="No change in activity." evidence="4">
    <original>H</original>
    <variation>N</variation>
    <location>
        <position position="241"/>
    </location>
</feature>
<feature type="mutagenesis site" description="Shows middle reactivity toward L-Arg and L-Phe, but does not induce change toward L-Leu, and L-Met." evidence="4">
    <original>H</original>
    <variation>S</variation>
    <location>
        <position position="241"/>
    </location>
</feature>